<proteinExistence type="predicted"/>
<evidence type="ECO:0000255" key="1"/>
<evidence type="ECO:0000305" key="2"/>
<organism>
    <name type="scientific">Aquifex aeolicus (strain VF5)</name>
    <dbReference type="NCBI Taxonomy" id="224324"/>
    <lineage>
        <taxon>Bacteria</taxon>
        <taxon>Pseudomonadati</taxon>
        <taxon>Aquificota</taxon>
        <taxon>Aquificia</taxon>
        <taxon>Aquificales</taxon>
        <taxon>Aquificaceae</taxon>
        <taxon>Aquifex</taxon>
    </lineage>
</organism>
<keyword id="KW-0175">Coiled coil</keyword>
<keyword id="KW-0472">Membrane</keyword>
<keyword id="KW-1185">Reference proteome</keyword>
<keyword id="KW-0812">Transmembrane</keyword>
<keyword id="KW-1133">Transmembrane helix</keyword>
<feature type="chain" id="PRO_0000186974" description="Uncharacterized protein aq_2145">
    <location>
        <begin position="1"/>
        <end position="216"/>
    </location>
</feature>
<feature type="transmembrane region" description="Helical" evidence="1">
    <location>
        <begin position="39"/>
        <end position="59"/>
    </location>
</feature>
<feature type="coiled-coil region" evidence="1">
    <location>
        <begin position="59"/>
        <end position="108"/>
    </location>
</feature>
<protein>
    <recommendedName>
        <fullName>Uncharacterized protein aq_2145</fullName>
    </recommendedName>
</protein>
<reference key="1">
    <citation type="journal article" date="1998" name="Nature">
        <title>The complete genome of the hyperthermophilic bacterium Aquifex aeolicus.</title>
        <authorList>
            <person name="Deckert G."/>
            <person name="Warren P.V."/>
            <person name="Gaasterland T."/>
            <person name="Young W.G."/>
            <person name="Lenox A.L."/>
            <person name="Graham D.E."/>
            <person name="Overbeek R."/>
            <person name="Snead M.A."/>
            <person name="Keller M."/>
            <person name="Aujay M."/>
            <person name="Huber R."/>
            <person name="Feldman R.A."/>
            <person name="Short J.M."/>
            <person name="Olsen G.J."/>
            <person name="Swanson R.V."/>
        </authorList>
    </citation>
    <scope>NUCLEOTIDE SEQUENCE [LARGE SCALE GENOMIC DNA]</scope>
    <source>
        <strain>VF5</strain>
    </source>
</reference>
<comment type="subcellular location">
    <subcellularLocation>
        <location evidence="2">Membrane</location>
        <topology evidence="2">Single-pass membrane protein</topology>
    </subcellularLocation>
</comment>
<gene>
    <name type="ordered locus">aq_2145</name>
</gene>
<accession>O67901</accession>
<dbReference type="EMBL" id="AE000657">
    <property type="protein sequence ID" value="AAC07872.1"/>
    <property type="molecule type" value="Genomic_DNA"/>
</dbReference>
<dbReference type="PIR" id="A70484">
    <property type="entry name" value="A70484"/>
</dbReference>
<dbReference type="RefSeq" id="NP_214470.1">
    <property type="nucleotide sequence ID" value="NC_000918.1"/>
</dbReference>
<dbReference type="RefSeq" id="WP_010881406.1">
    <property type="nucleotide sequence ID" value="NC_000918.1"/>
</dbReference>
<dbReference type="SMR" id="O67901"/>
<dbReference type="STRING" id="224324.aq_2145"/>
<dbReference type="EnsemblBacteria" id="AAC07872">
    <property type="protein sequence ID" value="AAC07872"/>
    <property type="gene ID" value="aq_2145"/>
</dbReference>
<dbReference type="KEGG" id="aae:aq_2145"/>
<dbReference type="HOGENOM" id="CLU_1275528_0_0_0"/>
<dbReference type="InParanoid" id="O67901"/>
<dbReference type="Proteomes" id="UP000000798">
    <property type="component" value="Chromosome"/>
</dbReference>
<dbReference type="GO" id="GO:0016020">
    <property type="term" value="C:membrane"/>
    <property type="evidence" value="ECO:0007669"/>
    <property type="project" value="UniProtKB-SubCell"/>
</dbReference>
<sequence>MANKRKEFIKLNLNKERKAFIELRGINLELLKEFLSSNVLPLTFIGSLLILILTIVYYFTLSGSVNELKNEISKEKSKKERLLSEIKRLEELKKTLETKKAIYEVVKIYNDMVIKILENPVNLPYGYSLQNFSLCAFRFKNCDIQEKLNKDKSFSLDKPIAQLDLVLFNRKLENYIPPDSIRKFTYVVIDNLPYRRVCIEPDYERLLAEKGHRKEE</sequence>
<name>Y2145_AQUAE</name>